<organism>
    <name type="scientific">Homo sapiens</name>
    <name type="common">Human</name>
    <dbReference type="NCBI Taxonomy" id="9606"/>
    <lineage>
        <taxon>Eukaryota</taxon>
        <taxon>Metazoa</taxon>
        <taxon>Chordata</taxon>
        <taxon>Craniata</taxon>
        <taxon>Vertebrata</taxon>
        <taxon>Euteleostomi</taxon>
        <taxon>Mammalia</taxon>
        <taxon>Eutheria</taxon>
        <taxon>Euarchontoglires</taxon>
        <taxon>Primates</taxon>
        <taxon>Haplorrhini</taxon>
        <taxon>Catarrhini</taxon>
        <taxon>Hominidae</taxon>
        <taxon>Homo</taxon>
    </lineage>
</organism>
<evidence type="ECO:0000255" key="1"/>
<evidence type="ECO:0000256" key="2">
    <source>
        <dbReference type="SAM" id="MobiDB-lite"/>
    </source>
</evidence>
<evidence type="ECO:0000269" key="3">
    <source>
    </source>
</evidence>
<evidence type="ECO:0000303" key="4">
    <source>
    </source>
</evidence>
<evidence type="ECO:0000303" key="5">
    <source>
    </source>
</evidence>
<evidence type="ECO:0000303" key="6">
    <source>
    </source>
</evidence>
<evidence type="ECO:0000305" key="7"/>
<sequence>MFGAASRMDTTAVCTGGVTESRGIVDSLQKFSSLPAYLPTNLHISNAEESFFLKEANQDLTRNSSLQARVEPFFIYRARTPPIINASYGPFSVEKIIPQELLLTSTAFGNMDKFPFNWKLKSHILDSSIYSNRPKVQTLFYVTGMGWDDSDLTEDLPCVKMFAFPEAREVAASCRLQGAPGLCVAELELLPEWFSSGLDLEPEEEIPALLGGTTMELFFTLYPADKAGQCPLEEEGKWENNIHSGLESPQQAFPARERIGSVVVYPTQDDLKWSLVSLDENVVISVPLNLVREGDTATFLVSLTSSSVADQFTLRIKAAAGVKITAVRVSSEDQWAVQEEIDNGSTQTSATLTCMGHRPDTQSRVNGSFYEILQVDFGIDNSSDLAGAQQITWQVEYPIEDSMSELVVSEIFVSQTTFVGIVPLAMDTEVLNTAILTGKPVSVPVKVVGVQEDGSVVDVSESVECKSADEDVIKVSNNCDSIFVNGKEMKSKVDTIVNFTHQHFTSQFEVTVWAPRLPLQIEISDTELSQIKGWRIPVAANRRPTRESDDEDDEEKKGRGCSLQYQHATVRVLTQFVAESPDLGQLTYMLGPDWQFDITDLVTEFMKVEEPKIAQLQDGRTLAGREPGITTVQVLSPLSDSILAEKTVIVLDDRVTIAELGVQLVAGMSLSLQPHRADKRAIVSTAAALDVLQSPQQEAIVSSWILFSDGSVTPLDIYDPKDYSVTVSSLDEMVVSVQANLESKWPIVVAEGEGQGPLIKLEMMISEPCQKTKRKSVLAVGKGNVKVKFEPSSDEHQGGSNDIEGINREYKDHLSNSIEREGNQERAVQEWFHRGTPVGQEESTNKSTTPQSPMEGKNKLLKSGGPDAFTSFPTQGKSPDPNNPSDLTVTSRGLTDLEIGMYALLCVFCLAILVFLINCVAFAWKYRHKRFAVSEQGNIPHSHDWVWLGNEVELLENPVDITLPSEECTTMIDRGLQFEERNFLLNGSSQKTFHSQLLRPSDYVYEKEIKNEPMNSSGPKRKRVKFTSYTTILPEDGGPYTNSILFDSDDNIKWVCQDMGLGDSQDFRDYMESLQDQM</sequence>
<accession>Q14DG7</accession>
<accession>A2RRG8</accession>
<accession>Q8NA73</accession>
<accession>Q96JN9</accession>
<accession>Q96PY1</accession>
<feature type="chain" id="PRO_0000284620" description="Transmembrane protein 132B">
    <location>
        <begin position="1"/>
        <end position="1078"/>
    </location>
</feature>
<feature type="topological domain" description="Extracellular" evidence="1">
    <location>
        <begin position="1"/>
        <end position="903"/>
    </location>
</feature>
<feature type="transmembrane region" description="Helical" evidence="1">
    <location>
        <begin position="904"/>
        <end position="924"/>
    </location>
</feature>
<feature type="topological domain" description="Cytoplasmic" evidence="1">
    <location>
        <begin position="925"/>
        <end position="1078"/>
    </location>
</feature>
<feature type="region of interest" description="Disordered" evidence="2">
    <location>
        <begin position="834"/>
        <end position="887"/>
    </location>
</feature>
<feature type="compositionally biased region" description="Polar residues" evidence="2">
    <location>
        <begin position="841"/>
        <end position="852"/>
    </location>
</feature>
<feature type="glycosylation site" description="N-linked (GlcNAc...) asparagine" evidence="1">
    <location>
        <position position="343"/>
    </location>
</feature>
<feature type="glycosylation site" description="N-linked (GlcNAc...) asparagine" evidence="1">
    <location>
        <position position="366"/>
    </location>
</feature>
<feature type="glycosylation site" description="N-linked (GlcNAc...) asparagine" evidence="1">
    <location>
        <position position="381"/>
    </location>
</feature>
<feature type="splice variant" id="VSP_024576" description="In isoform 3." evidence="5 6">
    <location>
        <begin position="1"/>
        <end position="488"/>
    </location>
</feature>
<feature type="splice variant" id="VSP_024577" description="In isoform 2." evidence="4">
    <original>SNNCDSIFVNGKEMKSKVDTIVNFTHQ</original>
    <variation>RGDLSTAVLSAQSFLSFLLLSPRSCSH</variation>
    <location>
        <begin position="476"/>
        <end position="502"/>
    </location>
</feature>
<feature type="splice variant" id="VSP_024578" description="In isoform 2." evidence="4">
    <location>
        <begin position="503"/>
        <end position="1078"/>
    </location>
</feature>
<feature type="sequence variant" id="VAR_031786" description="In dbSNP:rs16919359." evidence="3">
    <original>A</original>
    <variation>V</variation>
    <location>
        <position position="658"/>
    </location>
</feature>
<feature type="sequence conflict" description="In Ref. 2; BAC04053." evidence="7" ref="2">
    <original>V</original>
    <variation>G</variation>
    <location>
        <position position="735"/>
    </location>
</feature>
<feature type="sequence conflict" description="In Ref. 2; BAC04053." evidence="7" ref="2">
    <original>N</original>
    <variation>D</variation>
    <location>
        <position position="957"/>
    </location>
</feature>
<gene>
    <name type="primary">TMEM132B</name>
    <name type="synonym">KIAA1786</name>
    <name type="synonym">KIAA1906</name>
</gene>
<keyword id="KW-0025">Alternative splicing</keyword>
<keyword id="KW-0325">Glycoprotein</keyword>
<keyword id="KW-0472">Membrane</keyword>
<keyword id="KW-1267">Proteomics identification</keyword>
<keyword id="KW-1185">Reference proteome</keyword>
<keyword id="KW-0812">Transmembrane</keyword>
<keyword id="KW-1133">Transmembrane helix</keyword>
<name>T132B_HUMAN</name>
<proteinExistence type="evidence at protein level"/>
<dbReference type="EMBL" id="AC093028">
    <property type="status" value="NOT_ANNOTATED_CDS"/>
    <property type="molecule type" value="Genomic_DNA"/>
</dbReference>
<dbReference type="EMBL" id="AC026370">
    <property type="status" value="NOT_ANNOTATED_CDS"/>
    <property type="molecule type" value="Genomic_DNA"/>
</dbReference>
<dbReference type="EMBL" id="AC073618">
    <property type="status" value="NOT_ANNOTATED_CDS"/>
    <property type="molecule type" value="Genomic_DNA"/>
</dbReference>
<dbReference type="EMBL" id="AC004806">
    <property type="status" value="NOT_ANNOTATED_CDS"/>
    <property type="molecule type" value="Genomic_DNA"/>
</dbReference>
<dbReference type="EMBL" id="AC005146">
    <property type="status" value="NOT_ANNOTATED_CDS"/>
    <property type="molecule type" value="Genomic_DNA"/>
</dbReference>
<dbReference type="EMBL" id="AK093097">
    <property type="protein sequence ID" value="BAC04053.1"/>
    <property type="molecule type" value="mRNA"/>
</dbReference>
<dbReference type="EMBL" id="BC113366">
    <property type="protein sequence ID" value="AAI13367.1"/>
    <property type="molecule type" value="mRNA"/>
</dbReference>
<dbReference type="EMBL" id="BC113368">
    <property type="protein sequence ID" value="AAI13369.1"/>
    <property type="molecule type" value="mRNA"/>
</dbReference>
<dbReference type="EMBL" id="BC131621">
    <property type="protein sequence ID" value="AAI31622.1"/>
    <property type="molecule type" value="mRNA"/>
</dbReference>
<dbReference type="EMBL" id="AB058689">
    <property type="protein sequence ID" value="BAB47415.1"/>
    <property type="molecule type" value="mRNA"/>
</dbReference>
<dbReference type="EMBL" id="AB067493">
    <property type="protein sequence ID" value="BAB67799.1"/>
    <property type="molecule type" value="mRNA"/>
</dbReference>
<dbReference type="CCDS" id="CCDS41859.1">
    <molecule id="Q14DG7-1"/>
</dbReference>
<dbReference type="CCDS" id="CCDS66501.1">
    <molecule id="Q14DG7-3"/>
</dbReference>
<dbReference type="RefSeq" id="NP_001273148.1">
    <molecule id="Q14DG7-3"/>
    <property type="nucleotide sequence ID" value="NM_001286219.2"/>
</dbReference>
<dbReference type="RefSeq" id="NP_443139.2">
    <molecule id="Q14DG7-1"/>
    <property type="nucleotide sequence ID" value="NM_052907.3"/>
</dbReference>
<dbReference type="RefSeq" id="XP_011536156.1">
    <molecule id="Q14DG7-3"/>
    <property type="nucleotide sequence ID" value="XM_011537854.3"/>
</dbReference>
<dbReference type="RefSeq" id="XP_054226975.1">
    <molecule id="Q14DG7-3"/>
    <property type="nucleotide sequence ID" value="XM_054371000.1"/>
</dbReference>
<dbReference type="SMR" id="Q14DG7"/>
<dbReference type="BioGRID" id="125357">
    <property type="interactions" value="2"/>
</dbReference>
<dbReference type="FunCoup" id="Q14DG7">
    <property type="interactions" value="42"/>
</dbReference>
<dbReference type="STRING" id="9606.ENSP00000299308"/>
<dbReference type="GlyCosmos" id="Q14DG7">
    <property type="glycosylation" value="3 sites, No reported glycans"/>
</dbReference>
<dbReference type="GlyGen" id="Q14DG7">
    <property type="glycosylation" value="5 sites, 1 N-linked glycan (1 site)"/>
</dbReference>
<dbReference type="iPTMnet" id="Q14DG7"/>
<dbReference type="PhosphoSitePlus" id="Q14DG7"/>
<dbReference type="BioMuta" id="TMEM132B"/>
<dbReference type="DMDM" id="145566963"/>
<dbReference type="jPOST" id="Q14DG7"/>
<dbReference type="MassIVE" id="Q14DG7"/>
<dbReference type="PaxDb" id="9606-ENSP00000299308"/>
<dbReference type="PeptideAtlas" id="Q14DG7"/>
<dbReference type="ProteomicsDB" id="60346">
    <molecule id="Q14DG7-1"/>
</dbReference>
<dbReference type="ProteomicsDB" id="60347">
    <molecule id="Q14DG7-2"/>
</dbReference>
<dbReference type="ProteomicsDB" id="60348">
    <molecule id="Q14DG7-3"/>
</dbReference>
<dbReference type="Antibodypedia" id="31916">
    <property type="antibodies" value="43 antibodies from 19 providers"/>
</dbReference>
<dbReference type="DNASU" id="114795"/>
<dbReference type="Ensembl" id="ENST00000299308.7">
    <molecule id="Q14DG7-1"/>
    <property type="protein sequence ID" value="ENSP00000299308.3"/>
    <property type="gene ID" value="ENSG00000139364.11"/>
</dbReference>
<dbReference type="Ensembl" id="ENST00000613307.1">
    <molecule id="Q14DG7-3"/>
    <property type="protein sequence ID" value="ENSP00000482788.1"/>
    <property type="gene ID" value="ENSG00000139364.11"/>
</dbReference>
<dbReference type="GeneID" id="114795"/>
<dbReference type="KEGG" id="hsa:114795"/>
<dbReference type="UCSC" id="uc001uhe.3">
    <molecule id="Q14DG7-1"/>
    <property type="organism name" value="human"/>
</dbReference>
<dbReference type="AGR" id="HGNC:29397"/>
<dbReference type="CTD" id="114795"/>
<dbReference type="DisGeNET" id="114795"/>
<dbReference type="GeneCards" id="TMEM132B"/>
<dbReference type="HGNC" id="HGNC:29397">
    <property type="gene designation" value="TMEM132B"/>
</dbReference>
<dbReference type="HPA" id="ENSG00000139364">
    <property type="expression patterns" value="Tissue enriched (brain)"/>
</dbReference>
<dbReference type="MIM" id="620260">
    <property type="type" value="gene"/>
</dbReference>
<dbReference type="neXtProt" id="NX_Q14DG7"/>
<dbReference type="OpenTargets" id="ENSG00000139364"/>
<dbReference type="PharmGKB" id="PA143485652"/>
<dbReference type="VEuPathDB" id="HostDB:ENSG00000139364"/>
<dbReference type="eggNOG" id="KOG4789">
    <property type="taxonomic scope" value="Eukaryota"/>
</dbReference>
<dbReference type="GeneTree" id="ENSGT00940000159630"/>
<dbReference type="HOGENOM" id="CLU_009871_0_0_1"/>
<dbReference type="InParanoid" id="Q14DG7"/>
<dbReference type="OMA" id="VKVSNTC"/>
<dbReference type="OrthoDB" id="10026202at2759"/>
<dbReference type="PAN-GO" id="Q14DG7">
    <property type="GO annotations" value="0 GO annotations based on evolutionary models"/>
</dbReference>
<dbReference type="PhylomeDB" id="Q14DG7"/>
<dbReference type="TreeFam" id="TF314981"/>
<dbReference type="PathwayCommons" id="Q14DG7"/>
<dbReference type="BioGRID-ORCS" id="114795">
    <property type="hits" value="11 hits in 1143 CRISPR screens"/>
</dbReference>
<dbReference type="ChiTaRS" id="TMEM132B">
    <property type="organism name" value="human"/>
</dbReference>
<dbReference type="GenomeRNAi" id="114795"/>
<dbReference type="Pharos" id="Q14DG7">
    <property type="development level" value="Tdark"/>
</dbReference>
<dbReference type="PRO" id="PR:Q14DG7"/>
<dbReference type="Proteomes" id="UP000005640">
    <property type="component" value="Chromosome 12"/>
</dbReference>
<dbReference type="RNAct" id="Q14DG7">
    <property type="molecule type" value="protein"/>
</dbReference>
<dbReference type="Bgee" id="ENSG00000139364">
    <property type="expression patterns" value="Expressed in ventricular zone and 124 other cell types or tissues"/>
</dbReference>
<dbReference type="GO" id="GO:0016020">
    <property type="term" value="C:membrane"/>
    <property type="evidence" value="ECO:0007669"/>
    <property type="project" value="UniProtKB-SubCell"/>
</dbReference>
<dbReference type="InterPro" id="IPR055422">
    <property type="entry name" value="Ig_TMEM132_2nd"/>
</dbReference>
<dbReference type="InterPro" id="IPR055423">
    <property type="entry name" value="Ig_TMEM132_5th"/>
</dbReference>
<dbReference type="InterPro" id="IPR055424">
    <property type="entry name" value="Ig_TMEM132_6th"/>
</dbReference>
<dbReference type="InterPro" id="IPR026307">
    <property type="entry name" value="TMEM132"/>
</dbReference>
<dbReference type="InterPro" id="IPR055421">
    <property type="entry name" value="TMEM132_3rd"/>
</dbReference>
<dbReference type="InterPro" id="IPR031436">
    <property type="entry name" value="TMEM132_C"/>
</dbReference>
<dbReference type="InterPro" id="IPR031437">
    <property type="entry name" value="TMEM132_M"/>
</dbReference>
<dbReference type="InterPro" id="IPR031435">
    <property type="entry name" value="TMEM132_N"/>
</dbReference>
<dbReference type="PANTHER" id="PTHR13388">
    <property type="entry name" value="DETONATOR, ISOFORM E"/>
    <property type="match status" value="1"/>
</dbReference>
<dbReference type="PANTHER" id="PTHR13388:SF12">
    <property type="entry name" value="TRANSMEMBRANE PROTEIN 132B"/>
    <property type="match status" value="1"/>
</dbReference>
<dbReference type="Pfam" id="PF23481">
    <property type="entry name" value="Ig_TMEM132_2nd"/>
    <property type="match status" value="1"/>
</dbReference>
<dbReference type="Pfam" id="PF16070">
    <property type="entry name" value="Ig_TMEM132_4th"/>
    <property type="match status" value="1"/>
</dbReference>
<dbReference type="Pfam" id="PF23486">
    <property type="entry name" value="Ig_TMEM132_5th"/>
    <property type="match status" value="1"/>
</dbReference>
<dbReference type="Pfam" id="PF23487">
    <property type="entry name" value="Ig_TMEM132_6th"/>
    <property type="match status" value="1"/>
</dbReference>
<dbReference type="Pfam" id="PF23039">
    <property type="entry name" value="TMEM132_3rd"/>
    <property type="match status" value="1"/>
</dbReference>
<dbReference type="Pfam" id="PF15706">
    <property type="entry name" value="TMEM132_C"/>
    <property type="match status" value="1"/>
</dbReference>
<dbReference type="Pfam" id="PF15705">
    <property type="entry name" value="TMEM132_N"/>
    <property type="match status" value="1"/>
</dbReference>
<reference key="1">
    <citation type="journal article" date="2006" name="Nature">
        <title>The finished DNA sequence of human chromosome 12.</title>
        <authorList>
            <person name="Scherer S.E."/>
            <person name="Muzny D.M."/>
            <person name="Buhay C.J."/>
            <person name="Chen R."/>
            <person name="Cree A."/>
            <person name="Ding Y."/>
            <person name="Dugan-Rocha S."/>
            <person name="Gill R."/>
            <person name="Gunaratne P."/>
            <person name="Harris R.A."/>
            <person name="Hawes A.C."/>
            <person name="Hernandez J."/>
            <person name="Hodgson A.V."/>
            <person name="Hume J."/>
            <person name="Jackson A."/>
            <person name="Khan Z.M."/>
            <person name="Kovar-Smith C."/>
            <person name="Lewis L.R."/>
            <person name="Lozado R.J."/>
            <person name="Metzker M.L."/>
            <person name="Milosavljevic A."/>
            <person name="Miner G.R."/>
            <person name="Montgomery K.T."/>
            <person name="Morgan M.B."/>
            <person name="Nazareth L.V."/>
            <person name="Scott G."/>
            <person name="Sodergren E."/>
            <person name="Song X.-Z."/>
            <person name="Steffen D."/>
            <person name="Lovering R.C."/>
            <person name="Wheeler D.A."/>
            <person name="Worley K.C."/>
            <person name="Yuan Y."/>
            <person name="Zhang Z."/>
            <person name="Adams C.Q."/>
            <person name="Ansari-Lari M.A."/>
            <person name="Ayele M."/>
            <person name="Brown M.J."/>
            <person name="Chen G."/>
            <person name="Chen Z."/>
            <person name="Clerc-Blankenburg K.P."/>
            <person name="Davis C."/>
            <person name="Delgado O."/>
            <person name="Dinh H.H."/>
            <person name="Draper H."/>
            <person name="Gonzalez-Garay M.L."/>
            <person name="Havlak P."/>
            <person name="Jackson L.R."/>
            <person name="Jacob L.S."/>
            <person name="Kelly S.H."/>
            <person name="Li L."/>
            <person name="Li Z."/>
            <person name="Liu J."/>
            <person name="Liu W."/>
            <person name="Lu J."/>
            <person name="Maheshwari M."/>
            <person name="Nguyen B.-V."/>
            <person name="Okwuonu G.O."/>
            <person name="Pasternak S."/>
            <person name="Perez L.M."/>
            <person name="Plopper F.J.H."/>
            <person name="Santibanez J."/>
            <person name="Shen H."/>
            <person name="Tabor P.E."/>
            <person name="Verduzco D."/>
            <person name="Waldron L."/>
            <person name="Wang Q."/>
            <person name="Williams G.A."/>
            <person name="Zhang J."/>
            <person name="Zhou J."/>
            <person name="Allen C.C."/>
            <person name="Amin A.G."/>
            <person name="Anyalebechi V."/>
            <person name="Bailey M."/>
            <person name="Barbaria J.A."/>
            <person name="Bimage K.E."/>
            <person name="Bryant N.P."/>
            <person name="Burch P.E."/>
            <person name="Burkett C.E."/>
            <person name="Burrell K.L."/>
            <person name="Calderon E."/>
            <person name="Cardenas V."/>
            <person name="Carter K."/>
            <person name="Casias K."/>
            <person name="Cavazos I."/>
            <person name="Cavazos S.R."/>
            <person name="Ceasar H."/>
            <person name="Chacko J."/>
            <person name="Chan S.N."/>
            <person name="Chavez D."/>
            <person name="Christopoulos C."/>
            <person name="Chu J."/>
            <person name="Cockrell R."/>
            <person name="Cox C.D."/>
            <person name="Dang M."/>
            <person name="Dathorne S.R."/>
            <person name="David R."/>
            <person name="Davis C.M."/>
            <person name="Davy-Carroll L."/>
            <person name="Deshazo D.R."/>
            <person name="Donlin J.E."/>
            <person name="D'Souza L."/>
            <person name="Eaves K.A."/>
            <person name="Egan A."/>
            <person name="Emery-Cohen A.J."/>
            <person name="Escotto M."/>
            <person name="Flagg N."/>
            <person name="Forbes L.D."/>
            <person name="Gabisi A.M."/>
            <person name="Garza M."/>
            <person name="Hamilton C."/>
            <person name="Henderson N."/>
            <person name="Hernandez O."/>
            <person name="Hines S."/>
            <person name="Hogues M.E."/>
            <person name="Huang M."/>
            <person name="Idlebird D.G."/>
            <person name="Johnson R."/>
            <person name="Jolivet A."/>
            <person name="Jones S."/>
            <person name="Kagan R."/>
            <person name="King L.M."/>
            <person name="Leal B."/>
            <person name="Lebow H."/>
            <person name="Lee S."/>
            <person name="LeVan J.M."/>
            <person name="Lewis L.C."/>
            <person name="London P."/>
            <person name="Lorensuhewa L.M."/>
            <person name="Loulseged H."/>
            <person name="Lovett D.A."/>
            <person name="Lucier A."/>
            <person name="Lucier R.L."/>
            <person name="Ma J."/>
            <person name="Madu R.C."/>
            <person name="Mapua P."/>
            <person name="Martindale A.D."/>
            <person name="Martinez E."/>
            <person name="Massey E."/>
            <person name="Mawhiney S."/>
            <person name="Meador M.G."/>
            <person name="Mendez S."/>
            <person name="Mercado C."/>
            <person name="Mercado I.C."/>
            <person name="Merritt C.E."/>
            <person name="Miner Z.L."/>
            <person name="Minja E."/>
            <person name="Mitchell T."/>
            <person name="Mohabbat F."/>
            <person name="Mohabbat K."/>
            <person name="Montgomery B."/>
            <person name="Moore N."/>
            <person name="Morris S."/>
            <person name="Munidasa M."/>
            <person name="Ngo R.N."/>
            <person name="Nguyen N.B."/>
            <person name="Nickerson E."/>
            <person name="Nwaokelemeh O.O."/>
            <person name="Nwokenkwo S."/>
            <person name="Obregon M."/>
            <person name="Oguh M."/>
            <person name="Oragunye N."/>
            <person name="Oviedo R.J."/>
            <person name="Parish B.J."/>
            <person name="Parker D.N."/>
            <person name="Parrish J."/>
            <person name="Parks K.L."/>
            <person name="Paul H.A."/>
            <person name="Payton B.A."/>
            <person name="Perez A."/>
            <person name="Perrin W."/>
            <person name="Pickens A."/>
            <person name="Primus E.L."/>
            <person name="Pu L.-L."/>
            <person name="Puazo M."/>
            <person name="Quiles M.M."/>
            <person name="Quiroz J.B."/>
            <person name="Rabata D."/>
            <person name="Reeves K."/>
            <person name="Ruiz S.J."/>
            <person name="Shao H."/>
            <person name="Sisson I."/>
            <person name="Sonaike T."/>
            <person name="Sorelle R.P."/>
            <person name="Sutton A.E."/>
            <person name="Svatek A.F."/>
            <person name="Svetz L.A."/>
            <person name="Tamerisa K.S."/>
            <person name="Taylor T.R."/>
            <person name="Teague B."/>
            <person name="Thomas N."/>
            <person name="Thorn R.D."/>
            <person name="Trejos Z.Y."/>
            <person name="Trevino B.K."/>
            <person name="Ukegbu O.N."/>
            <person name="Urban J.B."/>
            <person name="Vasquez L.I."/>
            <person name="Vera V.A."/>
            <person name="Villasana D.M."/>
            <person name="Wang L."/>
            <person name="Ward-Moore S."/>
            <person name="Warren J.T."/>
            <person name="Wei X."/>
            <person name="White F."/>
            <person name="Williamson A.L."/>
            <person name="Wleczyk R."/>
            <person name="Wooden H.S."/>
            <person name="Wooden S.H."/>
            <person name="Yen J."/>
            <person name="Yoon L."/>
            <person name="Yoon V."/>
            <person name="Zorrilla S.E."/>
            <person name="Nelson D."/>
            <person name="Kucherlapati R."/>
            <person name="Weinstock G."/>
            <person name="Gibbs R.A."/>
        </authorList>
    </citation>
    <scope>NUCLEOTIDE SEQUENCE [LARGE SCALE GENOMIC DNA]</scope>
</reference>
<reference key="2">
    <citation type="journal article" date="2004" name="Nat. Genet.">
        <title>Complete sequencing and characterization of 21,243 full-length human cDNAs.</title>
        <authorList>
            <person name="Ota T."/>
            <person name="Suzuki Y."/>
            <person name="Nishikawa T."/>
            <person name="Otsuki T."/>
            <person name="Sugiyama T."/>
            <person name="Irie R."/>
            <person name="Wakamatsu A."/>
            <person name="Hayashi K."/>
            <person name="Sato H."/>
            <person name="Nagai K."/>
            <person name="Kimura K."/>
            <person name="Makita H."/>
            <person name="Sekine M."/>
            <person name="Obayashi M."/>
            <person name="Nishi T."/>
            <person name="Shibahara T."/>
            <person name="Tanaka T."/>
            <person name="Ishii S."/>
            <person name="Yamamoto J."/>
            <person name="Saito K."/>
            <person name="Kawai Y."/>
            <person name="Isono Y."/>
            <person name="Nakamura Y."/>
            <person name="Nagahari K."/>
            <person name="Murakami K."/>
            <person name="Yasuda T."/>
            <person name="Iwayanagi T."/>
            <person name="Wagatsuma M."/>
            <person name="Shiratori A."/>
            <person name="Sudo H."/>
            <person name="Hosoiri T."/>
            <person name="Kaku Y."/>
            <person name="Kodaira H."/>
            <person name="Kondo H."/>
            <person name="Sugawara M."/>
            <person name="Takahashi M."/>
            <person name="Kanda K."/>
            <person name="Yokoi T."/>
            <person name="Furuya T."/>
            <person name="Kikkawa E."/>
            <person name="Omura Y."/>
            <person name="Abe K."/>
            <person name="Kamihara K."/>
            <person name="Katsuta N."/>
            <person name="Sato K."/>
            <person name="Tanikawa M."/>
            <person name="Yamazaki M."/>
            <person name="Ninomiya K."/>
            <person name="Ishibashi T."/>
            <person name="Yamashita H."/>
            <person name="Murakawa K."/>
            <person name="Fujimori K."/>
            <person name="Tanai H."/>
            <person name="Kimata M."/>
            <person name="Watanabe M."/>
            <person name="Hiraoka S."/>
            <person name="Chiba Y."/>
            <person name="Ishida S."/>
            <person name="Ono Y."/>
            <person name="Takiguchi S."/>
            <person name="Watanabe S."/>
            <person name="Yosida M."/>
            <person name="Hotuta T."/>
            <person name="Kusano J."/>
            <person name="Kanehori K."/>
            <person name="Takahashi-Fujii A."/>
            <person name="Hara H."/>
            <person name="Tanase T.-O."/>
            <person name="Nomura Y."/>
            <person name="Togiya S."/>
            <person name="Komai F."/>
            <person name="Hara R."/>
            <person name="Takeuchi K."/>
            <person name="Arita M."/>
            <person name="Imose N."/>
            <person name="Musashino K."/>
            <person name="Yuuki H."/>
            <person name="Oshima A."/>
            <person name="Sasaki N."/>
            <person name="Aotsuka S."/>
            <person name="Yoshikawa Y."/>
            <person name="Matsunawa H."/>
            <person name="Ichihara T."/>
            <person name="Shiohata N."/>
            <person name="Sano S."/>
            <person name="Moriya S."/>
            <person name="Momiyama H."/>
            <person name="Satoh N."/>
            <person name="Takami S."/>
            <person name="Terashima Y."/>
            <person name="Suzuki O."/>
            <person name="Nakagawa S."/>
            <person name="Senoh A."/>
            <person name="Mizoguchi H."/>
            <person name="Goto Y."/>
            <person name="Shimizu F."/>
            <person name="Wakebe H."/>
            <person name="Hishigaki H."/>
            <person name="Watanabe T."/>
            <person name="Sugiyama A."/>
            <person name="Takemoto M."/>
            <person name="Kawakami B."/>
            <person name="Yamazaki M."/>
            <person name="Watanabe K."/>
            <person name="Kumagai A."/>
            <person name="Itakura S."/>
            <person name="Fukuzumi Y."/>
            <person name="Fujimori Y."/>
            <person name="Komiyama M."/>
            <person name="Tashiro H."/>
            <person name="Tanigami A."/>
            <person name="Fujiwara T."/>
            <person name="Ono T."/>
            <person name="Yamada K."/>
            <person name="Fujii Y."/>
            <person name="Ozaki K."/>
            <person name="Hirao M."/>
            <person name="Ohmori Y."/>
            <person name="Kawabata A."/>
            <person name="Hikiji T."/>
            <person name="Kobatake N."/>
            <person name="Inagaki H."/>
            <person name="Ikema Y."/>
            <person name="Okamoto S."/>
            <person name="Okitani R."/>
            <person name="Kawakami T."/>
            <person name="Noguchi S."/>
            <person name="Itoh T."/>
            <person name="Shigeta K."/>
            <person name="Senba T."/>
            <person name="Matsumura K."/>
            <person name="Nakajima Y."/>
            <person name="Mizuno T."/>
            <person name="Morinaga M."/>
            <person name="Sasaki M."/>
            <person name="Togashi T."/>
            <person name="Oyama M."/>
            <person name="Hata H."/>
            <person name="Watanabe M."/>
            <person name="Komatsu T."/>
            <person name="Mizushima-Sugano J."/>
            <person name="Satoh T."/>
            <person name="Shirai Y."/>
            <person name="Takahashi Y."/>
            <person name="Nakagawa K."/>
            <person name="Okumura K."/>
            <person name="Nagase T."/>
            <person name="Nomura N."/>
            <person name="Kikuchi H."/>
            <person name="Masuho Y."/>
            <person name="Yamashita R."/>
            <person name="Nakai K."/>
            <person name="Yada T."/>
            <person name="Nakamura Y."/>
            <person name="Ohara O."/>
            <person name="Isogai T."/>
            <person name="Sugano S."/>
        </authorList>
    </citation>
    <scope>NUCLEOTIDE SEQUENCE [LARGE SCALE MRNA] (ISOFORM 3)</scope>
    <source>
        <tissue>Testis</tissue>
    </source>
</reference>
<reference key="3">
    <citation type="journal article" date="2004" name="Genome Res.">
        <title>The status, quality, and expansion of the NIH full-length cDNA project: the Mammalian Gene Collection (MGC).</title>
        <authorList>
            <consortium name="The MGC Project Team"/>
        </authorList>
    </citation>
    <scope>NUCLEOTIDE SEQUENCE [LARGE SCALE MRNA] (ISOFORM 3)</scope>
    <scope>VARIANT VAL-658</scope>
    <source>
        <tissue>Cerebellum</tissue>
    </source>
</reference>
<reference key="4">
    <citation type="journal article" date="2001" name="DNA Res.">
        <title>Prediction of the coding sequences of unidentified human genes. XX. The complete sequences of 100 new cDNA clones from brain which code for large proteins in vitro.</title>
        <authorList>
            <person name="Nagase T."/>
            <person name="Nakayama M."/>
            <person name="Nakajima D."/>
            <person name="Kikuno R."/>
            <person name="Ohara O."/>
        </authorList>
    </citation>
    <scope>NUCLEOTIDE SEQUENCE [LARGE SCALE MRNA] OF 103-1078 (ISOFORM 2)</scope>
    <source>
        <tissue>Brain</tissue>
    </source>
</reference>
<reference key="5">
    <citation type="journal article" date="2001" name="DNA Res.">
        <title>Prediction of the coding sequences of unidentified human genes. XXI. The complete sequences of 60 new cDNA clones from brain which code for large proteins.</title>
        <authorList>
            <person name="Nagase T."/>
            <person name="Kikuno R."/>
            <person name="Ohara O."/>
        </authorList>
    </citation>
    <scope>NUCLEOTIDE SEQUENCE [LARGE SCALE MRNA] OF 486-1078 (ISOFORM 1)</scope>
    <source>
        <tissue>Brain</tissue>
    </source>
</reference>
<protein>
    <recommendedName>
        <fullName>Transmembrane protein 132B</fullName>
    </recommendedName>
</protein>
<comment type="subcellular location">
    <subcellularLocation>
        <location evidence="7">Membrane</location>
        <topology evidence="7">Single-pass type I membrane protein</topology>
    </subcellularLocation>
</comment>
<comment type="alternative products">
    <event type="alternative splicing"/>
    <isoform>
        <id>Q14DG7-1</id>
        <name>1</name>
        <sequence type="displayed"/>
    </isoform>
    <isoform>
        <id>Q14DG7-2</id>
        <name>2</name>
        <sequence type="described" ref="VSP_024577 VSP_024578"/>
    </isoform>
    <isoform>
        <id>Q14DG7-3</id>
        <name>3</name>
        <sequence type="described" ref="VSP_024576"/>
    </isoform>
</comment>
<comment type="similarity">
    <text evidence="7">Belongs to the TMEM132 family.</text>
</comment>